<organism>
    <name type="scientific">Lactobacillus gasseri (strain ATCC 33323 / DSM 20243 / BCRC 14619 / CIP 102991 / JCM 1131 / KCTC 3163 / NCIMB 11718 / NCTC 13722 / AM63)</name>
    <dbReference type="NCBI Taxonomy" id="324831"/>
    <lineage>
        <taxon>Bacteria</taxon>
        <taxon>Bacillati</taxon>
        <taxon>Bacillota</taxon>
        <taxon>Bacilli</taxon>
        <taxon>Lactobacillales</taxon>
        <taxon>Lactobacillaceae</taxon>
        <taxon>Lactobacillus</taxon>
    </lineage>
</organism>
<sequence length="429" mass="47424">MTAIAVVGSQWGDEGKGKITDFLSKDAAMAVRSNGGNNAGHTIEIGDKTFKMRLIPSGIFAAKKGAVIGNGVVINPEVMFGELDNLEKEGIDISGLKISNRAHVIMPYHILQDTYQEEAKGDKKIGTTKNGIGPCYMDKASRIGIRVCDLLERDTFEEKLRTNLAEKNALFTKVYNKPALKFEDIFEKYLEYGQKMKKYVTDTSVVVNDALDKNEKVLFEGAQGVMLDIDEGTYPYVTSSNTISGGIASGIGMGANRLNTVIGVCKAYTTRVGEGPFPTELLDEVGDRIRETAHEYGTVTGRPRRVGWFDSVALRHAKRVAGINALSLNLLDVFSGFDKIKIATAYELDGKKIDYYPASLKELYRCKPVYEELPAWDEDITNVKTWEDLPENAKKFLNRVSELVGVPLVTVSVGPDREQTIVLKNPWEM</sequence>
<gene>
    <name evidence="1" type="primary">purA</name>
    <name type="ordered locus">LGAS_0390</name>
</gene>
<reference key="1">
    <citation type="journal article" date="2006" name="Proc. Natl. Acad. Sci. U.S.A.">
        <title>Comparative genomics of the lactic acid bacteria.</title>
        <authorList>
            <person name="Makarova K.S."/>
            <person name="Slesarev A."/>
            <person name="Wolf Y.I."/>
            <person name="Sorokin A."/>
            <person name="Mirkin B."/>
            <person name="Koonin E.V."/>
            <person name="Pavlov A."/>
            <person name="Pavlova N."/>
            <person name="Karamychev V."/>
            <person name="Polouchine N."/>
            <person name="Shakhova V."/>
            <person name="Grigoriev I."/>
            <person name="Lou Y."/>
            <person name="Rohksar D."/>
            <person name="Lucas S."/>
            <person name="Huang K."/>
            <person name="Goodstein D.M."/>
            <person name="Hawkins T."/>
            <person name="Plengvidhya V."/>
            <person name="Welker D."/>
            <person name="Hughes J."/>
            <person name="Goh Y."/>
            <person name="Benson A."/>
            <person name="Baldwin K."/>
            <person name="Lee J.-H."/>
            <person name="Diaz-Muniz I."/>
            <person name="Dosti B."/>
            <person name="Smeianov V."/>
            <person name="Wechter W."/>
            <person name="Barabote R."/>
            <person name="Lorca G."/>
            <person name="Altermann E."/>
            <person name="Barrangou R."/>
            <person name="Ganesan B."/>
            <person name="Xie Y."/>
            <person name="Rawsthorne H."/>
            <person name="Tamir D."/>
            <person name="Parker C."/>
            <person name="Breidt F."/>
            <person name="Broadbent J.R."/>
            <person name="Hutkins R."/>
            <person name="O'Sullivan D."/>
            <person name="Steele J."/>
            <person name="Unlu G."/>
            <person name="Saier M.H. Jr."/>
            <person name="Klaenhammer T."/>
            <person name="Richardson P."/>
            <person name="Kozyavkin S."/>
            <person name="Weimer B.C."/>
            <person name="Mills D.A."/>
        </authorList>
    </citation>
    <scope>NUCLEOTIDE SEQUENCE [LARGE SCALE GENOMIC DNA]</scope>
    <source>
        <strain>ATCC 33323 / DSM 20243 / BCRC 14619 / CIP 102991 / JCM 1131 / KCTC 3163 / NCIMB 11718 / NCTC 13722 / AM63</strain>
    </source>
</reference>
<name>PURA_LACGA</name>
<feature type="chain" id="PRO_1000000844" description="Adenylosuccinate synthetase">
    <location>
        <begin position="1"/>
        <end position="429"/>
    </location>
</feature>
<feature type="active site" description="Proton acceptor" evidence="1">
    <location>
        <position position="13"/>
    </location>
</feature>
<feature type="active site" description="Proton donor" evidence="1">
    <location>
        <position position="41"/>
    </location>
</feature>
<feature type="binding site" evidence="1">
    <location>
        <begin position="12"/>
        <end position="18"/>
    </location>
    <ligand>
        <name>GTP</name>
        <dbReference type="ChEBI" id="CHEBI:37565"/>
    </ligand>
</feature>
<feature type="binding site" description="in other chain" evidence="1">
    <location>
        <begin position="13"/>
        <end position="16"/>
    </location>
    <ligand>
        <name>IMP</name>
        <dbReference type="ChEBI" id="CHEBI:58053"/>
        <note>ligand shared between dimeric partners</note>
    </ligand>
</feature>
<feature type="binding site" evidence="1">
    <location>
        <position position="13"/>
    </location>
    <ligand>
        <name>Mg(2+)</name>
        <dbReference type="ChEBI" id="CHEBI:18420"/>
    </ligand>
</feature>
<feature type="binding site" description="in other chain" evidence="1">
    <location>
        <begin position="38"/>
        <end position="41"/>
    </location>
    <ligand>
        <name>IMP</name>
        <dbReference type="ChEBI" id="CHEBI:58053"/>
        <note>ligand shared between dimeric partners</note>
    </ligand>
</feature>
<feature type="binding site" evidence="1">
    <location>
        <begin position="40"/>
        <end position="42"/>
    </location>
    <ligand>
        <name>GTP</name>
        <dbReference type="ChEBI" id="CHEBI:37565"/>
    </ligand>
</feature>
<feature type="binding site" evidence="1">
    <location>
        <position position="40"/>
    </location>
    <ligand>
        <name>Mg(2+)</name>
        <dbReference type="ChEBI" id="CHEBI:18420"/>
    </ligand>
</feature>
<feature type="binding site" description="in other chain" evidence="1">
    <location>
        <position position="128"/>
    </location>
    <ligand>
        <name>IMP</name>
        <dbReference type="ChEBI" id="CHEBI:58053"/>
        <note>ligand shared between dimeric partners</note>
    </ligand>
</feature>
<feature type="binding site" evidence="1">
    <location>
        <position position="142"/>
    </location>
    <ligand>
        <name>IMP</name>
        <dbReference type="ChEBI" id="CHEBI:58053"/>
        <note>ligand shared between dimeric partners</note>
    </ligand>
</feature>
<feature type="binding site" description="in other chain" evidence="1">
    <location>
        <position position="223"/>
    </location>
    <ligand>
        <name>IMP</name>
        <dbReference type="ChEBI" id="CHEBI:58053"/>
        <note>ligand shared between dimeric partners</note>
    </ligand>
</feature>
<feature type="binding site" description="in other chain" evidence="1">
    <location>
        <position position="238"/>
    </location>
    <ligand>
        <name>IMP</name>
        <dbReference type="ChEBI" id="CHEBI:58053"/>
        <note>ligand shared between dimeric partners</note>
    </ligand>
</feature>
<feature type="binding site" evidence="1">
    <location>
        <begin position="298"/>
        <end position="304"/>
    </location>
    <ligand>
        <name>substrate</name>
    </ligand>
</feature>
<feature type="binding site" description="in other chain" evidence="1">
    <location>
        <position position="302"/>
    </location>
    <ligand>
        <name>IMP</name>
        <dbReference type="ChEBI" id="CHEBI:58053"/>
        <note>ligand shared between dimeric partners</note>
    </ligand>
</feature>
<feature type="binding site" evidence="1">
    <location>
        <position position="304"/>
    </location>
    <ligand>
        <name>GTP</name>
        <dbReference type="ChEBI" id="CHEBI:37565"/>
    </ligand>
</feature>
<feature type="binding site" evidence="1">
    <location>
        <begin position="330"/>
        <end position="332"/>
    </location>
    <ligand>
        <name>GTP</name>
        <dbReference type="ChEBI" id="CHEBI:37565"/>
    </ligand>
</feature>
<feature type="binding site" evidence="1">
    <location>
        <begin position="412"/>
        <end position="414"/>
    </location>
    <ligand>
        <name>GTP</name>
        <dbReference type="ChEBI" id="CHEBI:37565"/>
    </ligand>
</feature>
<dbReference type="EC" id="6.3.4.4" evidence="1"/>
<dbReference type="EMBL" id="CP000413">
    <property type="protein sequence ID" value="ABJ59795.1"/>
    <property type="molecule type" value="Genomic_DNA"/>
</dbReference>
<dbReference type="RefSeq" id="WP_003647743.1">
    <property type="nucleotide sequence ID" value="NZ_WBMG01000001.1"/>
</dbReference>
<dbReference type="SMR" id="Q045S7"/>
<dbReference type="KEGG" id="lga:LGAS_0390"/>
<dbReference type="HOGENOM" id="CLU_029848_0_0_9"/>
<dbReference type="BioCyc" id="LGAS324831:G1G6Y-389-MONOMER"/>
<dbReference type="UniPathway" id="UPA00075">
    <property type="reaction ID" value="UER00335"/>
</dbReference>
<dbReference type="Proteomes" id="UP000000664">
    <property type="component" value="Chromosome"/>
</dbReference>
<dbReference type="GO" id="GO:0005737">
    <property type="term" value="C:cytoplasm"/>
    <property type="evidence" value="ECO:0007669"/>
    <property type="project" value="UniProtKB-SubCell"/>
</dbReference>
<dbReference type="GO" id="GO:0004019">
    <property type="term" value="F:adenylosuccinate synthase activity"/>
    <property type="evidence" value="ECO:0007669"/>
    <property type="project" value="UniProtKB-UniRule"/>
</dbReference>
<dbReference type="GO" id="GO:0005525">
    <property type="term" value="F:GTP binding"/>
    <property type="evidence" value="ECO:0007669"/>
    <property type="project" value="UniProtKB-UniRule"/>
</dbReference>
<dbReference type="GO" id="GO:0000287">
    <property type="term" value="F:magnesium ion binding"/>
    <property type="evidence" value="ECO:0007669"/>
    <property type="project" value="UniProtKB-UniRule"/>
</dbReference>
<dbReference type="GO" id="GO:0044208">
    <property type="term" value="P:'de novo' AMP biosynthetic process"/>
    <property type="evidence" value="ECO:0007669"/>
    <property type="project" value="UniProtKB-UniRule"/>
</dbReference>
<dbReference type="GO" id="GO:0046040">
    <property type="term" value="P:IMP metabolic process"/>
    <property type="evidence" value="ECO:0007669"/>
    <property type="project" value="TreeGrafter"/>
</dbReference>
<dbReference type="CDD" id="cd03108">
    <property type="entry name" value="AdSS"/>
    <property type="match status" value="1"/>
</dbReference>
<dbReference type="FunFam" id="1.10.300.10:FF:000001">
    <property type="entry name" value="Adenylosuccinate synthetase"/>
    <property type="match status" value="1"/>
</dbReference>
<dbReference type="FunFam" id="3.90.170.10:FF:000001">
    <property type="entry name" value="Adenylosuccinate synthetase"/>
    <property type="match status" value="1"/>
</dbReference>
<dbReference type="Gene3D" id="3.40.440.10">
    <property type="entry name" value="Adenylosuccinate Synthetase, subunit A, domain 1"/>
    <property type="match status" value="1"/>
</dbReference>
<dbReference type="Gene3D" id="1.10.300.10">
    <property type="entry name" value="Adenylosuccinate Synthetase, subunit A, domain 2"/>
    <property type="match status" value="1"/>
</dbReference>
<dbReference type="Gene3D" id="3.90.170.10">
    <property type="entry name" value="Adenylosuccinate Synthetase, subunit A, domain 3"/>
    <property type="match status" value="1"/>
</dbReference>
<dbReference type="HAMAP" id="MF_00011">
    <property type="entry name" value="Adenylosucc_synth"/>
    <property type="match status" value="1"/>
</dbReference>
<dbReference type="InterPro" id="IPR018220">
    <property type="entry name" value="Adenylosuccin_syn_GTP-bd"/>
</dbReference>
<dbReference type="InterPro" id="IPR033128">
    <property type="entry name" value="Adenylosuccin_syn_Lys_AS"/>
</dbReference>
<dbReference type="InterPro" id="IPR042109">
    <property type="entry name" value="Adenylosuccinate_synth_dom1"/>
</dbReference>
<dbReference type="InterPro" id="IPR042110">
    <property type="entry name" value="Adenylosuccinate_synth_dom2"/>
</dbReference>
<dbReference type="InterPro" id="IPR042111">
    <property type="entry name" value="Adenylosuccinate_synth_dom3"/>
</dbReference>
<dbReference type="InterPro" id="IPR001114">
    <property type="entry name" value="Adenylosuccinate_synthetase"/>
</dbReference>
<dbReference type="InterPro" id="IPR027417">
    <property type="entry name" value="P-loop_NTPase"/>
</dbReference>
<dbReference type="NCBIfam" id="NF002223">
    <property type="entry name" value="PRK01117.1"/>
    <property type="match status" value="1"/>
</dbReference>
<dbReference type="NCBIfam" id="TIGR00184">
    <property type="entry name" value="purA"/>
    <property type="match status" value="1"/>
</dbReference>
<dbReference type="PANTHER" id="PTHR11846">
    <property type="entry name" value="ADENYLOSUCCINATE SYNTHETASE"/>
    <property type="match status" value="1"/>
</dbReference>
<dbReference type="PANTHER" id="PTHR11846:SF0">
    <property type="entry name" value="ADENYLOSUCCINATE SYNTHETASE"/>
    <property type="match status" value="1"/>
</dbReference>
<dbReference type="Pfam" id="PF00709">
    <property type="entry name" value="Adenylsucc_synt"/>
    <property type="match status" value="1"/>
</dbReference>
<dbReference type="SMART" id="SM00788">
    <property type="entry name" value="Adenylsucc_synt"/>
    <property type="match status" value="1"/>
</dbReference>
<dbReference type="SUPFAM" id="SSF52540">
    <property type="entry name" value="P-loop containing nucleoside triphosphate hydrolases"/>
    <property type="match status" value="1"/>
</dbReference>
<dbReference type="PROSITE" id="PS01266">
    <property type="entry name" value="ADENYLOSUCCIN_SYN_1"/>
    <property type="match status" value="1"/>
</dbReference>
<dbReference type="PROSITE" id="PS00513">
    <property type="entry name" value="ADENYLOSUCCIN_SYN_2"/>
    <property type="match status" value="1"/>
</dbReference>
<accession>Q045S7</accession>
<keyword id="KW-0963">Cytoplasm</keyword>
<keyword id="KW-0342">GTP-binding</keyword>
<keyword id="KW-0436">Ligase</keyword>
<keyword id="KW-0460">Magnesium</keyword>
<keyword id="KW-0479">Metal-binding</keyword>
<keyword id="KW-0547">Nucleotide-binding</keyword>
<keyword id="KW-0658">Purine biosynthesis</keyword>
<protein>
    <recommendedName>
        <fullName evidence="1">Adenylosuccinate synthetase</fullName>
        <shortName evidence="1">AMPSase</shortName>
        <shortName evidence="1">AdSS</shortName>
        <ecNumber evidence="1">6.3.4.4</ecNumber>
    </recommendedName>
    <alternativeName>
        <fullName evidence="1">IMP--aspartate ligase</fullName>
    </alternativeName>
</protein>
<comment type="function">
    <text evidence="1">Plays an important role in the de novo pathway of purine nucleotide biosynthesis. Catalyzes the first committed step in the biosynthesis of AMP from IMP.</text>
</comment>
<comment type="catalytic activity">
    <reaction evidence="1">
        <text>IMP + L-aspartate + GTP = N(6)-(1,2-dicarboxyethyl)-AMP + GDP + phosphate + 2 H(+)</text>
        <dbReference type="Rhea" id="RHEA:15753"/>
        <dbReference type="ChEBI" id="CHEBI:15378"/>
        <dbReference type="ChEBI" id="CHEBI:29991"/>
        <dbReference type="ChEBI" id="CHEBI:37565"/>
        <dbReference type="ChEBI" id="CHEBI:43474"/>
        <dbReference type="ChEBI" id="CHEBI:57567"/>
        <dbReference type="ChEBI" id="CHEBI:58053"/>
        <dbReference type="ChEBI" id="CHEBI:58189"/>
        <dbReference type="EC" id="6.3.4.4"/>
    </reaction>
</comment>
<comment type="cofactor">
    <cofactor evidence="1">
        <name>Mg(2+)</name>
        <dbReference type="ChEBI" id="CHEBI:18420"/>
    </cofactor>
    <text evidence="1">Binds 1 Mg(2+) ion per subunit.</text>
</comment>
<comment type="pathway">
    <text evidence="1">Purine metabolism; AMP biosynthesis via de novo pathway; AMP from IMP: step 1/2.</text>
</comment>
<comment type="subunit">
    <text evidence="1">Homodimer.</text>
</comment>
<comment type="subcellular location">
    <subcellularLocation>
        <location evidence="1">Cytoplasm</location>
    </subcellularLocation>
</comment>
<comment type="similarity">
    <text evidence="1">Belongs to the adenylosuccinate synthetase family.</text>
</comment>
<proteinExistence type="inferred from homology"/>
<evidence type="ECO:0000255" key="1">
    <source>
        <dbReference type="HAMAP-Rule" id="MF_00011"/>
    </source>
</evidence>